<name>TILS_LEPBJ</name>
<organism>
    <name type="scientific">Leptospira borgpetersenii serovar Hardjo-bovis (strain JB197)</name>
    <dbReference type="NCBI Taxonomy" id="355277"/>
    <lineage>
        <taxon>Bacteria</taxon>
        <taxon>Pseudomonadati</taxon>
        <taxon>Spirochaetota</taxon>
        <taxon>Spirochaetia</taxon>
        <taxon>Leptospirales</taxon>
        <taxon>Leptospiraceae</taxon>
        <taxon>Leptospira</taxon>
    </lineage>
</organism>
<proteinExistence type="inferred from homology"/>
<feature type="chain" id="PRO_1000065617" description="tRNA(Ile)-lysidine synthase">
    <location>
        <begin position="1"/>
        <end position="425"/>
    </location>
</feature>
<feature type="binding site" evidence="1">
    <location>
        <begin position="37"/>
        <end position="42"/>
    </location>
    <ligand>
        <name>ATP</name>
        <dbReference type="ChEBI" id="CHEBI:30616"/>
    </ligand>
</feature>
<sequence>MRDKISESTRNIFDTVWKRIFPFHEMILSRPAVLSYSGGKDSSLLLHFYFWLWAEKKIPVPCIYHLDHSIRFNLEQEKKILDYTESTFPFPNLFKKKNIPALSQKLGKTLEETGRAFRYKDLEKISNQYEGYIVTGHHSTDYLETVFLNLIRGGGWNSLRTLGWYEKNRFRPLFAFTEDEIKTISQSESWPIFEDESNQSNEYLRNRIRNYILPLLLQEGADPDRIYKNFHRMEKPTSKILLKEVSSHKTPSFLKIDVWVLNDLSERERKFFIDRYLRSLNLHPTTRNFFQDLMDCLKKMNSFGIENKEAWFWKSSSYDLYVIPKNSLCLKKFKLESKNMILKWNGSQKKISPGFIPGLCSPGAKIRKNGMSIEISEILRQKEIPVPVRKMLPILYREGKVDVICLSLWDPRLGDIVADRSRNFI</sequence>
<protein>
    <recommendedName>
        <fullName evidence="1">tRNA(Ile)-lysidine synthase</fullName>
        <ecNumber evidence="1">6.3.4.19</ecNumber>
    </recommendedName>
    <alternativeName>
        <fullName evidence="1">tRNA(Ile)-2-lysyl-cytidine synthase</fullName>
    </alternativeName>
    <alternativeName>
        <fullName evidence="1">tRNA(Ile)-lysidine synthetase</fullName>
    </alternativeName>
</protein>
<evidence type="ECO:0000255" key="1">
    <source>
        <dbReference type="HAMAP-Rule" id="MF_01161"/>
    </source>
</evidence>
<accession>Q04W48</accession>
<dbReference type="EC" id="6.3.4.19" evidence="1"/>
<dbReference type="EMBL" id="CP000350">
    <property type="protein sequence ID" value="ABJ74872.1"/>
    <property type="molecule type" value="Genomic_DNA"/>
</dbReference>
<dbReference type="SMR" id="Q04W48"/>
<dbReference type="KEGG" id="lbj:LBJ_0128"/>
<dbReference type="HOGENOM" id="CLU_018869_0_1_12"/>
<dbReference type="Proteomes" id="UP000000656">
    <property type="component" value="Chromosome 1"/>
</dbReference>
<dbReference type="GO" id="GO:0005737">
    <property type="term" value="C:cytoplasm"/>
    <property type="evidence" value="ECO:0007669"/>
    <property type="project" value="UniProtKB-SubCell"/>
</dbReference>
<dbReference type="GO" id="GO:0005524">
    <property type="term" value="F:ATP binding"/>
    <property type="evidence" value="ECO:0007669"/>
    <property type="project" value="UniProtKB-UniRule"/>
</dbReference>
<dbReference type="GO" id="GO:0032267">
    <property type="term" value="F:tRNA(Ile)-lysidine synthase activity"/>
    <property type="evidence" value="ECO:0007669"/>
    <property type="project" value="UniProtKB-EC"/>
</dbReference>
<dbReference type="GO" id="GO:0006400">
    <property type="term" value="P:tRNA modification"/>
    <property type="evidence" value="ECO:0007669"/>
    <property type="project" value="UniProtKB-UniRule"/>
</dbReference>
<dbReference type="CDD" id="cd01992">
    <property type="entry name" value="TilS_N"/>
    <property type="match status" value="1"/>
</dbReference>
<dbReference type="Gene3D" id="3.40.50.620">
    <property type="entry name" value="HUPs"/>
    <property type="match status" value="1"/>
</dbReference>
<dbReference type="HAMAP" id="MF_01161">
    <property type="entry name" value="tRNA_Ile_lys_synt"/>
    <property type="match status" value="1"/>
</dbReference>
<dbReference type="InterPro" id="IPR014729">
    <property type="entry name" value="Rossmann-like_a/b/a_fold"/>
</dbReference>
<dbReference type="InterPro" id="IPR011063">
    <property type="entry name" value="TilS/TtcA_N"/>
</dbReference>
<dbReference type="InterPro" id="IPR012094">
    <property type="entry name" value="tRNA_Ile_lys_synt"/>
</dbReference>
<dbReference type="InterPro" id="IPR012795">
    <property type="entry name" value="tRNA_Ile_lys_synt_N"/>
</dbReference>
<dbReference type="NCBIfam" id="TIGR02432">
    <property type="entry name" value="lysidine_TilS_N"/>
    <property type="match status" value="1"/>
</dbReference>
<dbReference type="PANTHER" id="PTHR43033">
    <property type="entry name" value="TRNA(ILE)-LYSIDINE SYNTHASE-RELATED"/>
    <property type="match status" value="1"/>
</dbReference>
<dbReference type="PANTHER" id="PTHR43033:SF1">
    <property type="entry name" value="TRNA(ILE)-LYSIDINE SYNTHASE-RELATED"/>
    <property type="match status" value="1"/>
</dbReference>
<dbReference type="Pfam" id="PF01171">
    <property type="entry name" value="ATP_bind_3"/>
    <property type="match status" value="1"/>
</dbReference>
<dbReference type="SUPFAM" id="SSF52402">
    <property type="entry name" value="Adenine nucleotide alpha hydrolases-like"/>
    <property type="match status" value="1"/>
</dbReference>
<comment type="function">
    <text evidence="1">Ligates lysine onto the cytidine present at position 34 of the AUA codon-specific tRNA(Ile) that contains the anticodon CAU, in an ATP-dependent manner. Cytidine is converted to lysidine, thus changing the amino acid specificity of the tRNA from methionine to isoleucine.</text>
</comment>
<comment type="catalytic activity">
    <reaction evidence="1">
        <text>cytidine(34) in tRNA(Ile2) + L-lysine + ATP = lysidine(34) in tRNA(Ile2) + AMP + diphosphate + H(+)</text>
        <dbReference type="Rhea" id="RHEA:43744"/>
        <dbReference type="Rhea" id="RHEA-COMP:10625"/>
        <dbReference type="Rhea" id="RHEA-COMP:10670"/>
        <dbReference type="ChEBI" id="CHEBI:15378"/>
        <dbReference type="ChEBI" id="CHEBI:30616"/>
        <dbReference type="ChEBI" id="CHEBI:32551"/>
        <dbReference type="ChEBI" id="CHEBI:33019"/>
        <dbReference type="ChEBI" id="CHEBI:82748"/>
        <dbReference type="ChEBI" id="CHEBI:83665"/>
        <dbReference type="ChEBI" id="CHEBI:456215"/>
        <dbReference type="EC" id="6.3.4.19"/>
    </reaction>
</comment>
<comment type="subcellular location">
    <subcellularLocation>
        <location evidence="1">Cytoplasm</location>
    </subcellularLocation>
</comment>
<comment type="domain">
    <text>The N-terminal region contains the highly conserved SGGXDS motif, predicted to be a P-loop motif involved in ATP binding.</text>
</comment>
<comment type="similarity">
    <text evidence="1">Belongs to the tRNA(Ile)-lysidine synthase family.</text>
</comment>
<keyword id="KW-0067">ATP-binding</keyword>
<keyword id="KW-0963">Cytoplasm</keyword>
<keyword id="KW-0436">Ligase</keyword>
<keyword id="KW-0547">Nucleotide-binding</keyword>
<keyword id="KW-0819">tRNA processing</keyword>
<reference key="1">
    <citation type="journal article" date="2006" name="Proc. Natl. Acad. Sci. U.S.A.">
        <title>Genome reduction in Leptospira borgpetersenii reflects limited transmission potential.</title>
        <authorList>
            <person name="Bulach D.M."/>
            <person name="Zuerner R.L."/>
            <person name="Wilson P."/>
            <person name="Seemann T."/>
            <person name="McGrath A."/>
            <person name="Cullen P.A."/>
            <person name="Davis J."/>
            <person name="Johnson M."/>
            <person name="Kuczek E."/>
            <person name="Alt D.P."/>
            <person name="Peterson-Burch B."/>
            <person name="Coppel R.L."/>
            <person name="Rood J.I."/>
            <person name="Davies J.K."/>
            <person name="Adler B."/>
        </authorList>
    </citation>
    <scope>NUCLEOTIDE SEQUENCE [LARGE SCALE GENOMIC DNA]</scope>
    <source>
        <strain>JB197</strain>
    </source>
</reference>
<gene>
    <name evidence="1" type="primary">tilS</name>
    <name type="ordered locus">LBJ_0128</name>
</gene>